<feature type="signal peptide" evidence="4">
    <location>
        <begin position="1"/>
        <end position="16"/>
    </location>
</feature>
<feature type="chain" id="PRO_5000059985" description="Female-specific lacrimal gland protein" evidence="10">
    <location>
        <begin position="17"/>
        <end position="172"/>
    </location>
</feature>
<feature type="disulfide bond" evidence="1">
    <location>
        <begin position="60"/>
        <end position="64"/>
    </location>
</feature>
<feature type="disulfide bond" evidence="1">
    <location>
        <begin position="79"/>
        <end position="170"/>
    </location>
</feature>
<evidence type="ECO:0000250" key="1">
    <source>
        <dbReference type="UniProtKB" id="P08937"/>
    </source>
</evidence>
<evidence type="ECO:0000255" key="2">
    <source>
        <dbReference type="RuleBase" id="RU003695"/>
    </source>
</evidence>
<evidence type="ECO:0000269" key="3">
    <source>
    </source>
</evidence>
<evidence type="ECO:0000269" key="4">
    <source>
    </source>
</evidence>
<evidence type="ECO:0000269" key="5">
    <source>
    </source>
</evidence>
<evidence type="ECO:0000269" key="6">
    <source>
    </source>
</evidence>
<evidence type="ECO:0000269" key="7">
    <source>
    </source>
</evidence>
<evidence type="ECO:0000269" key="8">
    <source>
    </source>
</evidence>
<evidence type="ECO:0000303" key="9">
    <source>
    </source>
</evidence>
<evidence type="ECO:0000305" key="10"/>
<evidence type="ECO:0000312" key="11">
    <source>
        <dbReference type="EMBL" id="AAK25813.1"/>
    </source>
</evidence>
<evidence type="ECO:0000312" key="12">
    <source>
        <dbReference type="EMBL" id="ABB79786.1"/>
    </source>
</evidence>
<sequence>MVKFLLLALALGVSCAHYQNLEVSPSEVDGKWYSLYIAADNKEKVSEGGPLRAYIKNVECIDECQTLKITFYTKVEGVCQEHTIVGRKGEDGKYITDFSGQNYFHIVEKSDDTMTFHNVNVDDSGKTNVILVVGRGESSSIEQKQRFEKTAEEYDIPKENIEDLVPTDNCDQ</sequence>
<gene>
    <name evidence="9" type="primary">FLP</name>
</gene>
<proteinExistence type="evidence at protein level"/>
<accession>Q99MG7</accession>
<name>FLP_MESAU</name>
<keyword id="KW-0903">Direct protein sequencing</keyword>
<keyword id="KW-1015">Disulfide bond</keyword>
<keyword id="KW-1185">Reference proteome</keyword>
<keyword id="KW-0964">Secreted</keyword>
<keyword id="KW-0732">Signal</keyword>
<reference evidence="11" key="1">
    <citation type="journal article" date="2005" name="Biochim. Biophys. Acta">
        <title>cDNA cloning and regulation of two sex-hormone-repressed hamster tear lipocalins having homology with odorant/pheromone-binding proteins.</title>
        <authorList>
            <person name="Srikantan S."/>
            <person name="Parekh V."/>
            <person name="De P.K."/>
        </authorList>
    </citation>
    <scope>NUCLEOTIDE SEQUENCE [MRNA]</scope>
    <scope>PROTEIN SEQUENCE OF 17-30</scope>
    <scope>SUBCELLULAR LOCATION</scope>
    <scope>TISSUE SPECIFICITY</scope>
    <scope>DEVELOPMENTAL STAGE</scope>
    <source>
        <tissue evidence="11">Lacrimal gland</tissue>
    </source>
</reference>
<reference evidence="12" key="2">
    <citation type="submission" date="2005-10" db="EMBL/GenBank/DDBJ databases">
        <title>Cloning and characterization of a gene encoding the female-specific lacrimal protein (FLP) of hamster.</title>
        <authorList>
            <person name="Srikantan S."/>
            <person name="Parekh V."/>
            <person name="De P.K."/>
        </authorList>
    </citation>
    <scope>NUCLEOTIDE SEQUENCE [GENOMIC DNA]</scope>
</reference>
<reference evidence="10" key="3">
    <citation type="journal article" date="1995" name="Biochem. Biophys. Res. Commun.">
        <title>Androgens and estrogens markedly inhibit expression of a 20-kDa major protein in hamster exorbital lacrimal gland.</title>
        <authorList>
            <person name="Ranganathan V."/>
            <person name="De P.K."/>
        </authorList>
    </citation>
    <scope>SUBCELLULAR LOCATION</scope>
    <scope>INDUCTION</scope>
</reference>
<reference evidence="10" key="4">
    <citation type="journal article" date="1998" name="Adv. Exp. Med. Biol.">
        <title>Hormonal influences on Syrian hamster lacrimal gland. Marked repression of a major 20 kDa secretory protein by estrogens, androgens, and thyroid hormones.</title>
        <authorList>
            <person name="De P.K."/>
            <person name="Ranganathan V."/>
        </authorList>
    </citation>
    <scope>TISSUE SPECIFICITY</scope>
    <scope>DEVELOPMENTAL STAGE</scope>
    <scope>INDUCTION</scope>
</reference>
<reference evidence="10" key="5">
    <citation type="journal article" date="1999" name="J. Steroid Biochem. Mol. Biol.">
        <title>Hormonal effects on hamster lacrimal gland female-specific major 20 kDa secretory protein and its immunological similarity with submandibular gland major male-specific proteins.</title>
        <authorList>
            <person name="Ranganathan V."/>
            <person name="Jana N.R."/>
            <person name="De P.K."/>
        </authorList>
    </citation>
    <scope>TISSUE SPECIFICITY</scope>
    <scope>DEVELOPMENTAL STAGE</scope>
    <scope>INDUCTION</scope>
</reference>
<reference evidence="10" key="6">
    <citation type="journal article" date="2007" name="Gen. Comp. Endocrinol.">
        <title>Estrogen and androgen repression of two female specific lacrimal lipocalins in hamster: Pituitary independent and sex hormone receptor mediated action.</title>
        <authorList>
            <person name="Srikantan S."/>
            <person name="Paliwal A."/>
            <person name="Quintanar-Stephano A."/>
            <person name="De P.K."/>
        </authorList>
    </citation>
    <scope>TISSUE SPECIFICITY</scope>
    <scope>INDUCTION</scope>
</reference>
<reference key="7">
    <citation type="journal article" date="2008" name="Gen. Comp. Endocrinol.">
        <title>Sex differences in expression and differential regulation by androgen and estrogen of two odorant-binding tear lipocalins in lacrimal glands of immature hamsters.</title>
        <authorList>
            <person name="Srikantan S."/>
            <person name="De P.K."/>
        </authorList>
    </citation>
    <scope>TISSUE SPECIFICITY</scope>
    <scope>DEVELOPMENTAL STAGE</scope>
    <scope>INDUCTION</scope>
</reference>
<reference evidence="10" key="8">
    <citation type="journal article" date="2010" name="Acta Crystallogr. F">
        <title>Cloning, overexpression, purification, crystallization and preliminary X-ray analysis of a female-specific lipocalin (FLP) expressed in the lacrimal glands of Syrian hamsters.</title>
        <authorList>
            <person name="Dubey V.P."/>
            <person name="Pal B."/>
            <person name="Srikantan S."/>
            <person name="Pottabathini S."/>
            <person name="De P.K."/>
            <person name="Sankaranarayanan R."/>
        </authorList>
    </citation>
    <scope>CRYSTALLIZATION</scope>
</reference>
<comment type="subcellular location">
    <subcellularLocation>
        <location evidence="4 7">Secreted</location>
    </subcellularLocation>
    <text evidence="4 7">Secreted by the lacrimal gland into tears.</text>
</comment>
<comment type="tissue specificity">
    <text evidence="3 4 5 6 8">Expressed in the lacrimal gland from where it is secreted into tears (at protein level).</text>
</comment>
<comment type="developmental stage">
    <text evidence="3 4 6 8">Expressed at low levels in lacrimal gland of both immature females and males at 10 days of age (at protein level) (PubMed:18703064). At 15 days of age, higher levels are found in males than females (at protein level) (PubMed:18703064). Levels decrease in males after day 20 and there is no expression in males by day 36 (at protein level) (PubMed:18703064). Highly expressed in lactating females when estrogen levels are low (PubMed:10622403, PubMed:15950295, PubMed:9634868). Levels drop by 25 days post-weaning (PubMed:10622403).</text>
</comment>
<comment type="induction">
    <text evidence="3 5 6 7 8">Repressed by estrogens, androgens and thyroxine in adults (at protein level) (PubMed:10622403, PubMed:17316636, PubMed:7887957, PubMed:9634868). Repression by estrogens and androgens does not occur in immature 20-day old animals (PubMed:18703064). Induced by prolonged light deprivation and starvation (at protein level) (PubMed:10622403).</text>
</comment>
<comment type="similarity">
    <text evidence="2">Belongs to the calycin superfamily. Lipocalin family.</text>
</comment>
<organism evidence="11">
    <name type="scientific">Mesocricetus auratus</name>
    <name type="common">Golden hamster</name>
    <dbReference type="NCBI Taxonomy" id="10036"/>
    <lineage>
        <taxon>Eukaryota</taxon>
        <taxon>Metazoa</taxon>
        <taxon>Chordata</taxon>
        <taxon>Craniata</taxon>
        <taxon>Vertebrata</taxon>
        <taxon>Euteleostomi</taxon>
        <taxon>Mammalia</taxon>
        <taxon>Eutheria</taxon>
        <taxon>Euarchontoglires</taxon>
        <taxon>Glires</taxon>
        <taxon>Rodentia</taxon>
        <taxon>Myomorpha</taxon>
        <taxon>Muroidea</taxon>
        <taxon>Cricetidae</taxon>
        <taxon>Cricetinae</taxon>
        <taxon>Mesocricetus</taxon>
    </lineage>
</organism>
<protein>
    <recommendedName>
        <fullName evidence="9">Female-specific lacrimal gland protein</fullName>
        <shortName evidence="9">Female-specific LG protein</shortName>
    </recommendedName>
</protein>
<dbReference type="EMBL" id="AF345648">
    <property type="protein sequence ID" value="AAK25813.1"/>
    <property type="molecule type" value="mRNA"/>
</dbReference>
<dbReference type="EMBL" id="DQ272346">
    <property type="protein sequence ID" value="ABB79786.1"/>
    <property type="molecule type" value="Genomic_DNA"/>
</dbReference>
<dbReference type="SMR" id="Q99MG7"/>
<dbReference type="Allergome" id="11698">
    <property type="allergen name" value="Mes a 1"/>
</dbReference>
<dbReference type="OrthoDB" id="9450562at2759"/>
<dbReference type="Proteomes" id="UP000189706">
    <property type="component" value="Unplaced"/>
</dbReference>
<dbReference type="GO" id="GO:0005615">
    <property type="term" value="C:extracellular space"/>
    <property type="evidence" value="ECO:0000314"/>
    <property type="project" value="UniProtKB"/>
</dbReference>
<dbReference type="GO" id="GO:0005549">
    <property type="term" value="F:odorant binding"/>
    <property type="evidence" value="ECO:0007669"/>
    <property type="project" value="TreeGrafter"/>
</dbReference>
<dbReference type="GO" id="GO:0036094">
    <property type="term" value="F:small molecule binding"/>
    <property type="evidence" value="ECO:0007669"/>
    <property type="project" value="InterPro"/>
</dbReference>
<dbReference type="CDD" id="cd19427">
    <property type="entry name" value="lipocalin_OBP-like"/>
    <property type="match status" value="1"/>
</dbReference>
<dbReference type="FunFam" id="2.40.128.20:FF:000008">
    <property type="entry name" value="Major urinary protein"/>
    <property type="match status" value="1"/>
</dbReference>
<dbReference type="Gene3D" id="2.40.128.20">
    <property type="match status" value="1"/>
</dbReference>
<dbReference type="InterPro" id="IPR012674">
    <property type="entry name" value="Calycin"/>
</dbReference>
<dbReference type="InterPro" id="IPR002345">
    <property type="entry name" value="Lipocalin"/>
</dbReference>
<dbReference type="InterPro" id="IPR022272">
    <property type="entry name" value="Lipocalin_CS"/>
</dbReference>
<dbReference type="InterPro" id="IPR000566">
    <property type="entry name" value="Lipocln_cytosolic_FA-bd_dom"/>
</dbReference>
<dbReference type="InterPro" id="IPR002448">
    <property type="entry name" value="OBP-like"/>
</dbReference>
<dbReference type="PANTHER" id="PTHR11430">
    <property type="entry name" value="LIPOCALIN"/>
    <property type="match status" value="1"/>
</dbReference>
<dbReference type="PANTHER" id="PTHR11430:SF65">
    <property type="entry name" value="ODORANT-BINDING PROTEIN 1A-RELATED"/>
    <property type="match status" value="1"/>
</dbReference>
<dbReference type="Pfam" id="PF00061">
    <property type="entry name" value="Lipocalin"/>
    <property type="match status" value="1"/>
</dbReference>
<dbReference type="PRINTS" id="PR01173">
    <property type="entry name" value="ODORANTBNDNG"/>
</dbReference>
<dbReference type="SUPFAM" id="SSF50814">
    <property type="entry name" value="Lipocalins"/>
    <property type="match status" value="1"/>
</dbReference>
<dbReference type="PROSITE" id="PS00213">
    <property type="entry name" value="LIPOCALIN"/>
    <property type="match status" value="1"/>
</dbReference>